<proteinExistence type="evidence at protein level"/>
<gene>
    <name type="primary">PROS1</name>
    <name type="synonym">PROS</name>
</gene>
<reference key="1">
    <citation type="journal article" date="1986" name="Proc. Natl. Acad. Sci. U.S.A.">
        <title>Primary structure of bovine vitamin K-dependent protein S.</title>
        <authorList>
            <person name="Dahlback B."/>
            <person name="Lundwall A."/>
            <person name="Stenflo J."/>
        </authorList>
    </citation>
    <scope>NUCLEOTIDE SEQUENCE [MRNA]</scope>
</reference>
<reference key="2">
    <citation type="submission" date="1992-02" db="EMBL/GenBank/DDBJ databases">
        <authorList>
            <person name="Wydro R."/>
            <person name="Cohen E."/>
            <person name="Dackowski W."/>
            <person name="Stenflo J."/>
            <person name="Lundwall A."/>
            <person name="Dahlback B."/>
        </authorList>
    </citation>
    <scope>NUCLEOTIDE SEQUENCE [MRNA]</scope>
</reference>
<reference key="3">
    <citation type="journal article" date="1986" name="J. Biol. Chem.">
        <title>Localization of thrombin cleavage sites in the amino-terminal region of bovine protein S.</title>
        <authorList>
            <person name="Dahlback B."/>
            <person name="Lundwall A."/>
            <person name="Stenflo J."/>
        </authorList>
    </citation>
    <scope>PROTEIN SEQUENCE OF 42-141</scope>
    <scope>HYDROXYLATION AT ASP-136; ASN-177; ASN-219 AND ASN-258</scope>
    <scope>GLYCOSYLATION AT ASN-499</scope>
    <scope>DISULFIDE BONDS</scope>
    <scope>GAMMA-CARBOXYGLUTAMATION AT GLU-47; GLU-48; GLU-55; GLU-57; GLU-60; GLU-61; GLU-66; GLU-67; GLU-70; GLU-73 AND GLU-77</scope>
</reference>
<comment type="function">
    <text>Anticoagulant plasma protein; it is a cofactor to activated protein C in the degradation of coagulation factors Va and VIIIa. It helps to prevent coagulation and stimulating fibrinolysis.</text>
</comment>
<comment type="subcellular location">
    <subcellularLocation>
        <location>Secreted</location>
    </subcellularLocation>
</comment>
<comment type="tissue specificity">
    <text>Plasma.</text>
</comment>
<comment type="PTM">
    <text evidence="6">The iron and 2-oxoglutarate dependent 3-hydroxylation of aspartate and asparagine is (R) stereospecific within EGF domains.</text>
</comment>
<accession>P07224</accession>
<organism>
    <name type="scientific">Bos taurus</name>
    <name type="common">Bovine</name>
    <dbReference type="NCBI Taxonomy" id="9913"/>
    <lineage>
        <taxon>Eukaryota</taxon>
        <taxon>Metazoa</taxon>
        <taxon>Chordata</taxon>
        <taxon>Craniata</taxon>
        <taxon>Vertebrata</taxon>
        <taxon>Euteleostomi</taxon>
        <taxon>Mammalia</taxon>
        <taxon>Eutheria</taxon>
        <taxon>Laurasiatheria</taxon>
        <taxon>Artiodactyla</taxon>
        <taxon>Ruminantia</taxon>
        <taxon>Pecora</taxon>
        <taxon>Bovidae</taxon>
        <taxon>Bovinae</taxon>
        <taxon>Bos</taxon>
    </lineage>
</organism>
<keyword id="KW-0094">Blood coagulation</keyword>
<keyword id="KW-0106">Calcium</keyword>
<keyword id="KW-0165">Cleavage on pair of basic residues</keyword>
<keyword id="KW-0903">Direct protein sequencing</keyword>
<keyword id="KW-1015">Disulfide bond</keyword>
<keyword id="KW-0245">EGF-like domain</keyword>
<keyword id="KW-0280">Fibrinolysis</keyword>
<keyword id="KW-0301">Gamma-carboxyglutamic acid</keyword>
<keyword id="KW-0325">Glycoprotein</keyword>
<keyword id="KW-0356">Hemostasis</keyword>
<keyword id="KW-0379">Hydroxylation</keyword>
<keyword id="KW-1185">Reference proteome</keyword>
<keyword id="KW-0677">Repeat</keyword>
<keyword id="KW-0964">Secreted</keyword>
<keyword id="KW-0732">Signal</keyword>
<keyword id="KW-0865">Zymogen</keyword>
<sequence length="675" mass="75133">MRVLGGRTGTLLACLALVLPVLEANFLSRQHASQVLIRRRRANTLLEETKKGNLERECIEELCNKEEAREIFENNPETEYFYPKYLGCLGSFRAGLFTAARLSTNAYPDLRSCVNAISDQCNPLPCNEDGFMTCKDGQATFTCICKSGWQGEKCESDINECKDPVNINGGCSQICENTPGSYHCSCKNGFVMLSNKKDCKDVDECVLKPSICGTAVCKNIPGDFECECAEGYKYNPVSKSCDDVDECAENLCAQLCVNYPGGYSCYCDGKKGFKLAQDQKSCEAVPVCLPLDLDKNYELLYLAEQFVGVVLYLKFRLPETTRFSAEFDFRTYDSEGVILYAESSDHSAWFLIALREGKIEIQFKNEKTTKMTTGGKVINDGLWHMVSVEELEQSISVKIAKEAVMNINKPGSLFKPTNGFLETKVYFAGVPRKMENALIRPINPRLDGCIRGWNLMNQGTSGVKEIIQEKQNKHCLVNVEKGSYYPGTGVAQFSINYKNESNPEAWQINVSLNIRPSAGTGVMLALVSDNTVPFALSLVDSATEKLQDILVSVESMVIGRIEAISLCSDQQTFLEIRVNRNNLELSTQLRKDSFHSEDFQRQFAILDEAMKGTVVTYLGGLPDVPFSATPVNAFYQGCMEVNINGVQVDLDEAISKHNDIRAHSCPSVWQKTKHT</sequence>
<name>PROS_BOVIN</name>
<feature type="signal peptide">
    <location>
        <begin position="1"/>
        <end position="24"/>
    </location>
</feature>
<feature type="propeptide" id="PRO_0000022117" evidence="6">
    <location>
        <begin position="25"/>
        <end position="41"/>
    </location>
</feature>
<feature type="chain" id="PRO_0000022118" description="Vitamin K-dependent protein S" evidence="7">
    <location>
        <begin position="42"/>
        <end position="675"/>
    </location>
</feature>
<feature type="domain" description="Gla" evidence="5">
    <location>
        <begin position="42"/>
        <end position="87"/>
    </location>
</feature>
<feature type="domain" description="EGF-like 1" evidence="3">
    <location>
        <begin position="117"/>
        <end position="155"/>
    </location>
</feature>
<feature type="domain" description="EGF-like 2; calcium-binding" evidence="3">
    <location>
        <begin position="157"/>
        <end position="200"/>
    </location>
</feature>
<feature type="domain" description="EGF-like 3; calcium-binding" evidence="3">
    <location>
        <begin position="201"/>
        <end position="242"/>
    </location>
</feature>
<feature type="domain" description="EGF-like 4; calcium-binding" evidence="3">
    <location>
        <begin position="243"/>
        <end position="283"/>
    </location>
</feature>
<feature type="domain" description="Laminin G-like 1" evidence="4">
    <location>
        <begin position="299"/>
        <end position="475"/>
    </location>
</feature>
<feature type="domain" description="Laminin G-like 2" evidence="4">
    <location>
        <begin position="484"/>
        <end position="665"/>
    </location>
</feature>
<feature type="region of interest" description="Thrombin-sensitive">
    <location>
        <begin position="88"/>
        <end position="116"/>
    </location>
</feature>
<feature type="site" description="Cleavage; by thrombin">
    <location>
        <begin position="93"/>
        <end position="94"/>
    </location>
</feature>
<feature type="site" description="Cleavage; by thrombin">
    <location>
        <begin position="111"/>
        <end position="112"/>
    </location>
</feature>
<feature type="modified residue" description="4-carboxyglutamate" evidence="5 6">
    <location>
        <position position="47"/>
    </location>
</feature>
<feature type="modified residue" description="4-carboxyglutamate" evidence="5 6">
    <location>
        <position position="48"/>
    </location>
</feature>
<feature type="modified residue" description="4-carboxyglutamate" evidence="5 6">
    <location>
        <position position="55"/>
    </location>
</feature>
<feature type="modified residue" description="4-carboxyglutamate" evidence="5 6">
    <location>
        <position position="57"/>
    </location>
</feature>
<feature type="modified residue" description="4-carboxyglutamate" evidence="5 6">
    <location>
        <position position="60"/>
    </location>
</feature>
<feature type="modified residue" description="4-carboxyglutamate" evidence="5 6">
    <location>
        <position position="61"/>
    </location>
</feature>
<feature type="modified residue" description="4-carboxyglutamate" evidence="5 6">
    <location>
        <position position="66"/>
    </location>
</feature>
<feature type="modified residue" description="4-carboxyglutamate" evidence="5 6">
    <location>
        <position position="67"/>
    </location>
</feature>
<feature type="modified residue" description="4-carboxyglutamate" evidence="5 6">
    <location>
        <position position="70"/>
    </location>
</feature>
<feature type="modified residue" description="4-carboxyglutamate" evidence="5 6">
    <location>
        <position position="73"/>
    </location>
</feature>
<feature type="modified residue" description="4-carboxyglutamate" evidence="5 6">
    <location>
        <position position="77"/>
    </location>
</feature>
<feature type="modified residue" description="(3R)-3-hydroxyaspartate" evidence="6">
    <location>
        <position position="136"/>
    </location>
</feature>
<feature type="modified residue" description="(3R)-3-hydroxyasparagine" evidence="6">
    <location>
        <position position="177"/>
    </location>
</feature>
<feature type="modified residue" description="(3R)-3-hydroxyasparagine" evidence="6">
    <location>
        <position position="219"/>
    </location>
</feature>
<feature type="modified residue" description="(3R)-3-hydroxyasparagine" evidence="6">
    <location>
        <position position="258"/>
    </location>
</feature>
<feature type="glycosylation site" description="N-linked (GlcNAc...) asparagine" evidence="6">
    <location>
        <position position="499"/>
    </location>
</feature>
<feature type="glycosylation site" description="N-linked (GlcNAc...) asparagine" evidence="2">
    <location>
        <position position="509"/>
    </location>
</feature>
<feature type="disulfide bond" evidence="1">
    <location>
        <begin position="58"/>
        <end position="63"/>
    </location>
</feature>
<feature type="disulfide bond" evidence="1">
    <location>
        <begin position="88"/>
        <end position="113"/>
    </location>
</feature>
<feature type="disulfide bond" evidence="1">
    <location>
        <begin position="121"/>
        <end position="134"/>
    </location>
</feature>
<feature type="disulfide bond" evidence="1">
    <location>
        <begin position="126"/>
        <end position="143"/>
    </location>
</feature>
<feature type="disulfide bond" evidence="1">
    <location>
        <begin position="145"/>
        <end position="154"/>
    </location>
</feature>
<feature type="disulfide bond" evidence="1">
    <location>
        <begin position="161"/>
        <end position="175"/>
    </location>
</feature>
<feature type="disulfide bond" evidence="1">
    <location>
        <begin position="171"/>
        <end position="184"/>
    </location>
</feature>
<feature type="disulfide bond" evidence="1">
    <location>
        <begin position="186"/>
        <end position="199"/>
    </location>
</feature>
<feature type="disulfide bond" evidence="1">
    <location>
        <begin position="205"/>
        <end position="217"/>
    </location>
</feature>
<feature type="disulfide bond" evidence="1">
    <location>
        <begin position="212"/>
        <end position="226"/>
    </location>
</feature>
<feature type="disulfide bond" evidence="1">
    <location>
        <begin position="228"/>
        <end position="241"/>
    </location>
</feature>
<feature type="disulfide bond" evidence="1">
    <location>
        <begin position="247"/>
        <end position="256"/>
    </location>
</feature>
<feature type="disulfide bond" evidence="1">
    <location>
        <begin position="252"/>
        <end position="265"/>
    </location>
</feature>
<feature type="disulfide bond" evidence="1">
    <location>
        <begin position="267"/>
        <end position="282"/>
    </location>
</feature>
<feature type="disulfide bond" evidence="6">
    <location>
        <begin position="288"/>
        <end position="567"/>
    </location>
</feature>
<feature type="disulfide bond" evidence="6">
    <location>
        <begin position="449"/>
        <end position="475"/>
    </location>
</feature>
<feature type="disulfide bond" evidence="6">
    <location>
        <begin position="638"/>
        <end position="665"/>
    </location>
</feature>
<evidence type="ECO:0000250" key="1"/>
<evidence type="ECO:0000255" key="2"/>
<evidence type="ECO:0000255" key="3">
    <source>
        <dbReference type="PROSITE-ProRule" id="PRU00076"/>
    </source>
</evidence>
<evidence type="ECO:0000255" key="4">
    <source>
        <dbReference type="PROSITE-ProRule" id="PRU00122"/>
    </source>
</evidence>
<evidence type="ECO:0000255" key="5">
    <source>
        <dbReference type="PROSITE-ProRule" id="PRU00463"/>
    </source>
</evidence>
<evidence type="ECO:0000269" key="6">
    <source>
    </source>
</evidence>
<evidence type="ECO:0000269" key="7">
    <source>
    </source>
</evidence>
<protein>
    <recommendedName>
        <fullName>Vitamin K-dependent protein S</fullName>
    </recommendedName>
</protein>
<dbReference type="EMBL" id="M13044">
    <property type="protein sequence ID" value="AAA30757.1"/>
    <property type="molecule type" value="mRNA"/>
</dbReference>
<dbReference type="EMBL" id="X12891">
    <property type="protein sequence ID" value="CAA31382.1"/>
    <property type="molecule type" value="mRNA"/>
</dbReference>
<dbReference type="PIR" id="A24759">
    <property type="entry name" value="KXBOS"/>
</dbReference>
<dbReference type="RefSeq" id="NP_776863.1">
    <property type="nucleotide sequence ID" value="NM_174438.1"/>
</dbReference>
<dbReference type="SMR" id="P07224"/>
<dbReference type="FunCoup" id="P07224">
    <property type="interactions" value="309"/>
</dbReference>
<dbReference type="STRING" id="9913.ENSBTAP00000069933"/>
<dbReference type="GlyCosmos" id="P07224">
    <property type="glycosylation" value="2 sites, No reported glycans"/>
</dbReference>
<dbReference type="GlyGen" id="P07224">
    <property type="glycosylation" value="2 sites"/>
</dbReference>
<dbReference type="iPTMnet" id="P07224"/>
<dbReference type="PaxDb" id="9913-ENSBTAP00000032310"/>
<dbReference type="GeneID" id="282006"/>
<dbReference type="KEGG" id="bta:282006"/>
<dbReference type="CTD" id="5627"/>
<dbReference type="VEuPathDB" id="HostDB:ENSBTAG00000023652"/>
<dbReference type="eggNOG" id="ENOG502QSNF">
    <property type="taxonomic scope" value="Eukaryota"/>
</dbReference>
<dbReference type="HOGENOM" id="CLU_026236_0_0_1"/>
<dbReference type="InParanoid" id="P07224"/>
<dbReference type="OrthoDB" id="4062651at2759"/>
<dbReference type="TreeFam" id="TF352157"/>
<dbReference type="Reactome" id="R-BTA-114608">
    <property type="pathway name" value="Platelet degranulation"/>
</dbReference>
<dbReference type="Reactome" id="R-BTA-140837">
    <property type="pathway name" value="Intrinsic Pathway of Fibrin Clot Formation"/>
</dbReference>
<dbReference type="Reactome" id="R-BTA-140875">
    <property type="pathway name" value="Common Pathway of Fibrin Clot Formation"/>
</dbReference>
<dbReference type="Reactome" id="R-BTA-159740">
    <property type="pathway name" value="Gamma-carboxylation of protein precursors"/>
</dbReference>
<dbReference type="Reactome" id="R-BTA-159763">
    <property type="pathway name" value="Transport of gamma-carboxylated protein precursors from the endoplasmic reticulum to the Golgi apparatus"/>
</dbReference>
<dbReference type="Reactome" id="R-BTA-159782">
    <property type="pathway name" value="Removal of aminoterminal propeptides from gamma-carboxylated proteins"/>
</dbReference>
<dbReference type="Reactome" id="R-BTA-202733">
    <property type="pathway name" value="Cell surface interactions at the vascular wall"/>
</dbReference>
<dbReference type="Proteomes" id="UP000009136">
    <property type="component" value="Chromosome 1"/>
</dbReference>
<dbReference type="Bgee" id="ENSBTAG00000023652">
    <property type="expression patterns" value="Expressed in liver and 103 other cell types or tissues"/>
</dbReference>
<dbReference type="GO" id="GO:0005615">
    <property type="term" value="C:extracellular space"/>
    <property type="evidence" value="ECO:0000318"/>
    <property type="project" value="GO_Central"/>
</dbReference>
<dbReference type="GO" id="GO:0005509">
    <property type="term" value="F:calcium ion binding"/>
    <property type="evidence" value="ECO:0007669"/>
    <property type="project" value="InterPro"/>
</dbReference>
<dbReference type="GO" id="GO:0007596">
    <property type="term" value="P:blood coagulation"/>
    <property type="evidence" value="ECO:0007669"/>
    <property type="project" value="UniProtKB-KW"/>
</dbReference>
<dbReference type="GO" id="GO:0042730">
    <property type="term" value="P:fibrinolysis"/>
    <property type="evidence" value="ECO:0007669"/>
    <property type="project" value="UniProtKB-KW"/>
</dbReference>
<dbReference type="CDD" id="cd00054">
    <property type="entry name" value="EGF_CA"/>
    <property type="match status" value="2"/>
</dbReference>
<dbReference type="CDD" id="cd00110">
    <property type="entry name" value="LamG"/>
    <property type="match status" value="1"/>
</dbReference>
<dbReference type="FunFam" id="2.10.25.10:FF:000240">
    <property type="entry name" value="Vitamin K-dependent protein S"/>
    <property type="match status" value="1"/>
</dbReference>
<dbReference type="FunFam" id="2.10.25.10:FF:000426">
    <property type="entry name" value="Vitamin K-dependent protein S"/>
    <property type="match status" value="1"/>
</dbReference>
<dbReference type="FunFam" id="2.10.25.10:FF:000748">
    <property type="entry name" value="Vitamin K-dependent protein S"/>
    <property type="match status" value="1"/>
</dbReference>
<dbReference type="FunFam" id="2.60.120.200:FF:000129">
    <property type="entry name" value="Vitamin K-dependent protein S"/>
    <property type="match status" value="1"/>
</dbReference>
<dbReference type="FunFam" id="2.60.120.200:FF:000077">
    <property type="entry name" value="vitamin K-dependent protein S"/>
    <property type="match status" value="1"/>
</dbReference>
<dbReference type="FunFam" id="4.10.740.10:FF:000001">
    <property type="entry name" value="vitamin K-dependent protein S"/>
    <property type="match status" value="1"/>
</dbReference>
<dbReference type="Gene3D" id="2.60.120.200">
    <property type="match status" value="2"/>
</dbReference>
<dbReference type="Gene3D" id="4.10.740.10">
    <property type="entry name" value="Coagulation Factor IX"/>
    <property type="match status" value="1"/>
</dbReference>
<dbReference type="Gene3D" id="2.10.25.10">
    <property type="entry name" value="Laminin"/>
    <property type="match status" value="4"/>
</dbReference>
<dbReference type="InterPro" id="IPR017857">
    <property type="entry name" value="Coagulation_fac-like_Gla_dom"/>
</dbReference>
<dbReference type="InterPro" id="IPR013320">
    <property type="entry name" value="ConA-like_dom_sf"/>
</dbReference>
<dbReference type="InterPro" id="IPR001881">
    <property type="entry name" value="EGF-like_Ca-bd_dom"/>
</dbReference>
<dbReference type="InterPro" id="IPR000742">
    <property type="entry name" value="EGF-like_dom"/>
</dbReference>
<dbReference type="InterPro" id="IPR000152">
    <property type="entry name" value="EGF-type_Asp/Asn_hydroxyl_site"/>
</dbReference>
<dbReference type="InterPro" id="IPR018097">
    <property type="entry name" value="EGF_Ca-bd_CS"/>
</dbReference>
<dbReference type="InterPro" id="IPR051145">
    <property type="entry name" value="GAS-SHBG-PROS"/>
</dbReference>
<dbReference type="InterPro" id="IPR035972">
    <property type="entry name" value="GLA-like_dom_SF"/>
</dbReference>
<dbReference type="InterPro" id="IPR000294">
    <property type="entry name" value="GLA_domain"/>
</dbReference>
<dbReference type="InterPro" id="IPR009030">
    <property type="entry name" value="Growth_fac_rcpt_cys_sf"/>
</dbReference>
<dbReference type="InterPro" id="IPR001791">
    <property type="entry name" value="Laminin_G"/>
</dbReference>
<dbReference type="InterPro" id="IPR049883">
    <property type="entry name" value="NOTCH1_EGF-like"/>
</dbReference>
<dbReference type="PANTHER" id="PTHR24040">
    <property type="entry name" value="LAMININ G-LIKE DOMAIN-CONTAINING PROTEIN"/>
    <property type="match status" value="1"/>
</dbReference>
<dbReference type="PANTHER" id="PTHR24040:SF0">
    <property type="entry name" value="VITAMIN K-DEPENDENT PROTEIN S"/>
    <property type="match status" value="1"/>
</dbReference>
<dbReference type="Pfam" id="PF00008">
    <property type="entry name" value="EGF"/>
    <property type="match status" value="1"/>
</dbReference>
<dbReference type="Pfam" id="PF07645">
    <property type="entry name" value="EGF_CA"/>
    <property type="match status" value="2"/>
</dbReference>
<dbReference type="Pfam" id="PF14670">
    <property type="entry name" value="FXa_inhibition"/>
    <property type="match status" value="1"/>
</dbReference>
<dbReference type="Pfam" id="PF00594">
    <property type="entry name" value="Gla"/>
    <property type="match status" value="1"/>
</dbReference>
<dbReference type="Pfam" id="PF00054">
    <property type="entry name" value="Laminin_G_1"/>
    <property type="match status" value="1"/>
</dbReference>
<dbReference type="Pfam" id="PF02210">
    <property type="entry name" value="Laminin_G_2"/>
    <property type="match status" value="1"/>
</dbReference>
<dbReference type="PRINTS" id="PR00001">
    <property type="entry name" value="GLABLOOD"/>
</dbReference>
<dbReference type="SMART" id="SM00181">
    <property type="entry name" value="EGF"/>
    <property type="match status" value="4"/>
</dbReference>
<dbReference type="SMART" id="SM00179">
    <property type="entry name" value="EGF_CA"/>
    <property type="match status" value="4"/>
</dbReference>
<dbReference type="SMART" id="SM00069">
    <property type="entry name" value="GLA"/>
    <property type="match status" value="1"/>
</dbReference>
<dbReference type="SMART" id="SM00282">
    <property type="entry name" value="LamG"/>
    <property type="match status" value="2"/>
</dbReference>
<dbReference type="SUPFAM" id="SSF49899">
    <property type="entry name" value="Concanavalin A-like lectins/glucanases"/>
    <property type="match status" value="2"/>
</dbReference>
<dbReference type="SUPFAM" id="SSF57630">
    <property type="entry name" value="GLA-domain"/>
    <property type="match status" value="1"/>
</dbReference>
<dbReference type="SUPFAM" id="SSF57184">
    <property type="entry name" value="Growth factor receptor domain"/>
    <property type="match status" value="1"/>
</dbReference>
<dbReference type="PROSITE" id="PS00010">
    <property type="entry name" value="ASX_HYDROXYL"/>
    <property type="match status" value="4"/>
</dbReference>
<dbReference type="PROSITE" id="PS00022">
    <property type="entry name" value="EGF_1"/>
    <property type="match status" value="1"/>
</dbReference>
<dbReference type="PROSITE" id="PS01186">
    <property type="entry name" value="EGF_2"/>
    <property type="match status" value="3"/>
</dbReference>
<dbReference type="PROSITE" id="PS50026">
    <property type="entry name" value="EGF_3"/>
    <property type="match status" value="3"/>
</dbReference>
<dbReference type="PROSITE" id="PS01187">
    <property type="entry name" value="EGF_CA"/>
    <property type="match status" value="3"/>
</dbReference>
<dbReference type="PROSITE" id="PS00011">
    <property type="entry name" value="GLA_1"/>
    <property type="match status" value="1"/>
</dbReference>
<dbReference type="PROSITE" id="PS50998">
    <property type="entry name" value="GLA_2"/>
    <property type="match status" value="1"/>
</dbReference>
<dbReference type="PROSITE" id="PS50025">
    <property type="entry name" value="LAM_G_DOMAIN"/>
    <property type="match status" value="2"/>
</dbReference>